<keyword id="KW-0030">Aminoacyl-tRNA synthetase</keyword>
<keyword id="KW-0067">ATP-binding</keyword>
<keyword id="KW-0963">Cytoplasm</keyword>
<keyword id="KW-0436">Ligase</keyword>
<keyword id="KW-0479">Metal-binding</keyword>
<keyword id="KW-0547">Nucleotide-binding</keyword>
<keyword id="KW-0648">Protein biosynthesis</keyword>
<keyword id="KW-0694">RNA-binding</keyword>
<keyword id="KW-0820">tRNA-binding</keyword>
<keyword id="KW-0862">Zinc</keyword>
<reference key="1">
    <citation type="journal article" date="2007" name="J. Bacteriol.">
        <title>Complete genome sequence of Haemophilus somnus (Histophilus somni) strain 129Pt and comparison to Haemophilus ducreyi 35000HP and Haemophilus influenzae Rd.</title>
        <authorList>
            <person name="Challacombe J.F."/>
            <person name="Duncan A.J."/>
            <person name="Brettin T.S."/>
            <person name="Bruce D."/>
            <person name="Chertkov O."/>
            <person name="Detter J.C."/>
            <person name="Han C.S."/>
            <person name="Misra M."/>
            <person name="Richardson P."/>
            <person name="Tapia R."/>
            <person name="Thayer N."/>
            <person name="Xie G."/>
            <person name="Inzana T.J."/>
        </authorList>
    </citation>
    <scope>NUCLEOTIDE SEQUENCE [LARGE SCALE GENOMIC DNA]</scope>
    <source>
        <strain>129Pt</strain>
    </source>
</reference>
<gene>
    <name evidence="1" type="primary">thrS</name>
    <name type="ordered locus">HS_0844</name>
</gene>
<comment type="function">
    <text evidence="1">Catalyzes the attachment of threonine to tRNA(Thr) in a two-step reaction: L-threonine is first activated by ATP to form Thr-AMP and then transferred to the acceptor end of tRNA(Thr). Also edits incorrectly charged L-seryl-tRNA(Thr).</text>
</comment>
<comment type="catalytic activity">
    <reaction evidence="1">
        <text>tRNA(Thr) + L-threonine + ATP = L-threonyl-tRNA(Thr) + AMP + diphosphate + H(+)</text>
        <dbReference type="Rhea" id="RHEA:24624"/>
        <dbReference type="Rhea" id="RHEA-COMP:9670"/>
        <dbReference type="Rhea" id="RHEA-COMP:9704"/>
        <dbReference type="ChEBI" id="CHEBI:15378"/>
        <dbReference type="ChEBI" id="CHEBI:30616"/>
        <dbReference type="ChEBI" id="CHEBI:33019"/>
        <dbReference type="ChEBI" id="CHEBI:57926"/>
        <dbReference type="ChEBI" id="CHEBI:78442"/>
        <dbReference type="ChEBI" id="CHEBI:78534"/>
        <dbReference type="ChEBI" id="CHEBI:456215"/>
        <dbReference type="EC" id="6.1.1.3"/>
    </reaction>
</comment>
<comment type="cofactor">
    <cofactor evidence="1">
        <name>Zn(2+)</name>
        <dbReference type="ChEBI" id="CHEBI:29105"/>
    </cofactor>
    <text evidence="1">Binds 1 zinc ion per subunit.</text>
</comment>
<comment type="subunit">
    <text evidence="1">Homodimer.</text>
</comment>
<comment type="subcellular location">
    <subcellularLocation>
        <location evidence="1">Cytoplasm</location>
    </subcellularLocation>
</comment>
<comment type="similarity">
    <text evidence="1">Belongs to the class-II aminoacyl-tRNA synthetase family.</text>
</comment>
<name>SYT_HISS1</name>
<organism>
    <name type="scientific">Histophilus somni (strain 129Pt)</name>
    <name type="common">Haemophilus somnus</name>
    <dbReference type="NCBI Taxonomy" id="205914"/>
    <lineage>
        <taxon>Bacteria</taxon>
        <taxon>Pseudomonadati</taxon>
        <taxon>Pseudomonadota</taxon>
        <taxon>Gammaproteobacteria</taxon>
        <taxon>Pasteurellales</taxon>
        <taxon>Pasteurellaceae</taxon>
        <taxon>Histophilus</taxon>
    </lineage>
</organism>
<sequence length="642" mass="74033">MPIITLPDGSQRQFDNPVSVLEVAQSIGSGLAKATIAGRVNGERRDASDMISEDANLEIITAKDEDGLEIIRHSTAHLLGHAIKQLFPNVKMAIGPTIDNGFYYDIDLDRSLTQEDIDTLEKRMLELAKTNYDVIKKRVSWQEARDTFESRAEPYKIAILDENIAKDDQPALYHHEEYIDMCRGPHVPNMRFCHHFKLMKVAGAYWRGNSDNKMLQRIYGTAWADKKQLADYLHRLEEAAKRDHRKIGKALDLYHMQEEAPGMVFWHNDGWTIFRELETFVRTKLKEYDYQEVKGPFMMDRVLWERTGHWQNYADLMFTTQSENREYAIKPMNCPGHVQIFNQGLKSYRDLPIRMAEFGSCHRNEPSGSLHGLMRVRGFTQDDAHIFCTEDQIESEVTSCIKMVYDIYSTFGFTDIFVKLSTRPEKRIGEDVMWDRAEQGLANALKHNGLEYEIQEGEGAFYGPKIEFALRDCLDREWQCGTIQLDFALPGRLDATYVAEDNARRTPVMIHRAILGSIERFIGIITEEYAGFFPTWLAPIQAVVMNITDSQADYVQKVVKQFSEAGLRVKADIRNEKVGFKIREHTLRRVPYMLVCGDKEIVENKIAVRTRKGTDLGTFSVEEFVEILKQQVRKRELTLLGE</sequence>
<dbReference type="EC" id="6.1.1.3" evidence="1"/>
<dbReference type="EMBL" id="CP000436">
    <property type="protein sequence ID" value="ABI25119.1"/>
    <property type="molecule type" value="Genomic_DNA"/>
</dbReference>
<dbReference type="SMR" id="Q0I3M2"/>
<dbReference type="KEGG" id="hso:HS_0844"/>
<dbReference type="eggNOG" id="COG0441">
    <property type="taxonomic scope" value="Bacteria"/>
</dbReference>
<dbReference type="HOGENOM" id="CLU_008554_0_1_6"/>
<dbReference type="GO" id="GO:0005829">
    <property type="term" value="C:cytosol"/>
    <property type="evidence" value="ECO:0007669"/>
    <property type="project" value="TreeGrafter"/>
</dbReference>
<dbReference type="GO" id="GO:0005524">
    <property type="term" value="F:ATP binding"/>
    <property type="evidence" value="ECO:0007669"/>
    <property type="project" value="UniProtKB-UniRule"/>
</dbReference>
<dbReference type="GO" id="GO:0046872">
    <property type="term" value="F:metal ion binding"/>
    <property type="evidence" value="ECO:0007669"/>
    <property type="project" value="UniProtKB-KW"/>
</dbReference>
<dbReference type="GO" id="GO:0004829">
    <property type="term" value="F:threonine-tRNA ligase activity"/>
    <property type="evidence" value="ECO:0007669"/>
    <property type="project" value="UniProtKB-UniRule"/>
</dbReference>
<dbReference type="GO" id="GO:0000049">
    <property type="term" value="F:tRNA binding"/>
    <property type="evidence" value="ECO:0007669"/>
    <property type="project" value="UniProtKB-KW"/>
</dbReference>
<dbReference type="GO" id="GO:0006435">
    <property type="term" value="P:threonyl-tRNA aminoacylation"/>
    <property type="evidence" value="ECO:0007669"/>
    <property type="project" value="UniProtKB-UniRule"/>
</dbReference>
<dbReference type="CDD" id="cd01667">
    <property type="entry name" value="TGS_ThrRS"/>
    <property type="match status" value="1"/>
</dbReference>
<dbReference type="CDD" id="cd00860">
    <property type="entry name" value="ThrRS_anticodon"/>
    <property type="match status" value="1"/>
</dbReference>
<dbReference type="CDD" id="cd00771">
    <property type="entry name" value="ThrRS_core"/>
    <property type="match status" value="1"/>
</dbReference>
<dbReference type="FunFam" id="3.10.20.30:FF:000005">
    <property type="entry name" value="Threonine--tRNA ligase"/>
    <property type="match status" value="1"/>
</dbReference>
<dbReference type="FunFam" id="3.30.54.20:FF:000002">
    <property type="entry name" value="Threonine--tRNA ligase"/>
    <property type="match status" value="1"/>
</dbReference>
<dbReference type="FunFam" id="3.30.930.10:FF:000002">
    <property type="entry name" value="Threonine--tRNA ligase"/>
    <property type="match status" value="1"/>
</dbReference>
<dbReference type="FunFam" id="3.40.50.800:FF:000001">
    <property type="entry name" value="Threonine--tRNA ligase"/>
    <property type="match status" value="1"/>
</dbReference>
<dbReference type="FunFam" id="3.30.980.10:FF:000005">
    <property type="entry name" value="Threonyl-tRNA synthetase, mitochondrial"/>
    <property type="match status" value="1"/>
</dbReference>
<dbReference type="Gene3D" id="3.10.20.30">
    <property type="match status" value="1"/>
</dbReference>
<dbReference type="Gene3D" id="3.30.54.20">
    <property type="match status" value="1"/>
</dbReference>
<dbReference type="Gene3D" id="3.40.50.800">
    <property type="entry name" value="Anticodon-binding domain"/>
    <property type="match status" value="1"/>
</dbReference>
<dbReference type="Gene3D" id="3.30.930.10">
    <property type="entry name" value="Bira Bifunctional Protein, Domain 2"/>
    <property type="match status" value="1"/>
</dbReference>
<dbReference type="Gene3D" id="3.30.980.10">
    <property type="entry name" value="Threonyl-trna Synthetase, Chain A, domain 2"/>
    <property type="match status" value="1"/>
</dbReference>
<dbReference type="HAMAP" id="MF_00184">
    <property type="entry name" value="Thr_tRNA_synth"/>
    <property type="match status" value="1"/>
</dbReference>
<dbReference type="InterPro" id="IPR002314">
    <property type="entry name" value="aa-tRNA-synt_IIb"/>
</dbReference>
<dbReference type="InterPro" id="IPR006195">
    <property type="entry name" value="aa-tRNA-synth_II"/>
</dbReference>
<dbReference type="InterPro" id="IPR045864">
    <property type="entry name" value="aa-tRNA-synth_II/BPL/LPL"/>
</dbReference>
<dbReference type="InterPro" id="IPR004154">
    <property type="entry name" value="Anticodon-bd"/>
</dbReference>
<dbReference type="InterPro" id="IPR036621">
    <property type="entry name" value="Anticodon-bd_dom_sf"/>
</dbReference>
<dbReference type="InterPro" id="IPR012675">
    <property type="entry name" value="Beta-grasp_dom_sf"/>
</dbReference>
<dbReference type="InterPro" id="IPR004095">
    <property type="entry name" value="TGS"/>
</dbReference>
<dbReference type="InterPro" id="IPR012676">
    <property type="entry name" value="TGS-like"/>
</dbReference>
<dbReference type="InterPro" id="IPR002320">
    <property type="entry name" value="Thr-tRNA-ligase_IIa"/>
</dbReference>
<dbReference type="InterPro" id="IPR018163">
    <property type="entry name" value="Thr/Ala-tRNA-synth_IIc_edit"/>
</dbReference>
<dbReference type="InterPro" id="IPR047246">
    <property type="entry name" value="ThrRS_anticodon"/>
</dbReference>
<dbReference type="InterPro" id="IPR033728">
    <property type="entry name" value="ThrRS_core"/>
</dbReference>
<dbReference type="InterPro" id="IPR012947">
    <property type="entry name" value="tRNA_SAD"/>
</dbReference>
<dbReference type="NCBIfam" id="TIGR00418">
    <property type="entry name" value="thrS"/>
    <property type="match status" value="1"/>
</dbReference>
<dbReference type="PANTHER" id="PTHR11451:SF44">
    <property type="entry name" value="THREONINE--TRNA LIGASE, CHLOROPLASTIC_MITOCHONDRIAL 2"/>
    <property type="match status" value="1"/>
</dbReference>
<dbReference type="PANTHER" id="PTHR11451">
    <property type="entry name" value="THREONINE-TRNA LIGASE"/>
    <property type="match status" value="1"/>
</dbReference>
<dbReference type="Pfam" id="PF03129">
    <property type="entry name" value="HGTP_anticodon"/>
    <property type="match status" value="1"/>
</dbReference>
<dbReference type="Pfam" id="PF02824">
    <property type="entry name" value="TGS"/>
    <property type="match status" value="1"/>
</dbReference>
<dbReference type="Pfam" id="PF00587">
    <property type="entry name" value="tRNA-synt_2b"/>
    <property type="match status" value="1"/>
</dbReference>
<dbReference type="Pfam" id="PF07973">
    <property type="entry name" value="tRNA_SAD"/>
    <property type="match status" value="1"/>
</dbReference>
<dbReference type="PRINTS" id="PR01047">
    <property type="entry name" value="TRNASYNTHTHR"/>
</dbReference>
<dbReference type="SMART" id="SM00863">
    <property type="entry name" value="tRNA_SAD"/>
    <property type="match status" value="1"/>
</dbReference>
<dbReference type="SUPFAM" id="SSF52954">
    <property type="entry name" value="Class II aaRS ABD-related"/>
    <property type="match status" value="1"/>
</dbReference>
<dbReference type="SUPFAM" id="SSF55681">
    <property type="entry name" value="Class II aaRS and biotin synthetases"/>
    <property type="match status" value="1"/>
</dbReference>
<dbReference type="SUPFAM" id="SSF81271">
    <property type="entry name" value="TGS-like"/>
    <property type="match status" value="1"/>
</dbReference>
<dbReference type="SUPFAM" id="SSF55186">
    <property type="entry name" value="ThrRS/AlaRS common domain"/>
    <property type="match status" value="1"/>
</dbReference>
<dbReference type="PROSITE" id="PS50862">
    <property type="entry name" value="AA_TRNA_LIGASE_II"/>
    <property type="match status" value="1"/>
</dbReference>
<dbReference type="PROSITE" id="PS51880">
    <property type="entry name" value="TGS"/>
    <property type="match status" value="1"/>
</dbReference>
<evidence type="ECO:0000255" key="1">
    <source>
        <dbReference type="HAMAP-Rule" id="MF_00184"/>
    </source>
</evidence>
<evidence type="ECO:0000255" key="2">
    <source>
        <dbReference type="PROSITE-ProRule" id="PRU01228"/>
    </source>
</evidence>
<feature type="chain" id="PRO_1000020400" description="Threonine--tRNA ligase">
    <location>
        <begin position="1"/>
        <end position="642"/>
    </location>
</feature>
<feature type="domain" description="TGS" evidence="2">
    <location>
        <begin position="1"/>
        <end position="61"/>
    </location>
</feature>
<feature type="region of interest" description="Catalytic" evidence="1">
    <location>
        <begin position="243"/>
        <end position="534"/>
    </location>
</feature>
<feature type="binding site" evidence="1">
    <location>
        <position position="334"/>
    </location>
    <ligand>
        <name>Zn(2+)</name>
        <dbReference type="ChEBI" id="CHEBI:29105"/>
    </ligand>
</feature>
<feature type="binding site" evidence="1">
    <location>
        <position position="385"/>
    </location>
    <ligand>
        <name>Zn(2+)</name>
        <dbReference type="ChEBI" id="CHEBI:29105"/>
    </ligand>
</feature>
<feature type="binding site" evidence="1">
    <location>
        <position position="511"/>
    </location>
    <ligand>
        <name>Zn(2+)</name>
        <dbReference type="ChEBI" id="CHEBI:29105"/>
    </ligand>
</feature>
<proteinExistence type="inferred from homology"/>
<accession>Q0I3M2</accession>
<protein>
    <recommendedName>
        <fullName evidence="1">Threonine--tRNA ligase</fullName>
        <ecNumber evidence="1">6.1.1.3</ecNumber>
    </recommendedName>
    <alternativeName>
        <fullName evidence="1">Threonyl-tRNA synthetase</fullName>
        <shortName evidence="1">ThrRS</shortName>
    </alternativeName>
</protein>